<accession>A1JKA7</accession>
<proteinExistence type="inferred from homology"/>
<dbReference type="EMBL" id="AM286415">
    <property type="protein sequence ID" value="CAL11018.1"/>
    <property type="molecule type" value="Genomic_DNA"/>
</dbReference>
<dbReference type="RefSeq" id="WP_005173073.1">
    <property type="nucleotide sequence ID" value="NC_008800.1"/>
</dbReference>
<dbReference type="RefSeq" id="YP_001005255.1">
    <property type="nucleotide sequence ID" value="NC_008800.1"/>
</dbReference>
<dbReference type="SMR" id="A1JKA7"/>
<dbReference type="KEGG" id="yen:YE0917"/>
<dbReference type="PATRIC" id="fig|393305.7.peg.1016"/>
<dbReference type="eggNOG" id="COG3021">
    <property type="taxonomic scope" value="Bacteria"/>
</dbReference>
<dbReference type="HOGENOM" id="CLU_083563_0_0_6"/>
<dbReference type="OrthoDB" id="9793162at2"/>
<dbReference type="Proteomes" id="UP000000642">
    <property type="component" value="Chromosome"/>
</dbReference>
<dbReference type="GO" id="GO:0005737">
    <property type="term" value="C:cytoplasm"/>
    <property type="evidence" value="ECO:0007669"/>
    <property type="project" value="UniProtKB-SubCell"/>
</dbReference>
<dbReference type="GO" id="GO:0003824">
    <property type="term" value="F:catalytic activity"/>
    <property type="evidence" value="ECO:0007669"/>
    <property type="project" value="InterPro"/>
</dbReference>
<dbReference type="Gene3D" id="3.60.10.10">
    <property type="entry name" value="Endonuclease/exonuclease/phosphatase"/>
    <property type="match status" value="1"/>
</dbReference>
<dbReference type="HAMAP" id="MF_01119">
    <property type="entry name" value="UPF0294"/>
    <property type="match status" value="1"/>
</dbReference>
<dbReference type="InterPro" id="IPR036691">
    <property type="entry name" value="Endo/exonu/phosph_ase_sf"/>
</dbReference>
<dbReference type="InterPro" id="IPR005135">
    <property type="entry name" value="Endo/exonuclease/phosphatase"/>
</dbReference>
<dbReference type="InterPro" id="IPR022958">
    <property type="entry name" value="UPF0294"/>
</dbReference>
<dbReference type="NCBIfam" id="NF003839">
    <property type="entry name" value="PRK05421.1-1"/>
    <property type="match status" value="1"/>
</dbReference>
<dbReference type="NCBIfam" id="NF003840">
    <property type="entry name" value="PRK05421.1-2"/>
    <property type="match status" value="1"/>
</dbReference>
<dbReference type="NCBIfam" id="NF003841">
    <property type="entry name" value="PRK05421.1-3"/>
    <property type="match status" value="1"/>
</dbReference>
<dbReference type="NCBIfam" id="NF003842">
    <property type="entry name" value="PRK05421.1-4"/>
    <property type="match status" value="1"/>
</dbReference>
<dbReference type="Pfam" id="PF03372">
    <property type="entry name" value="Exo_endo_phos"/>
    <property type="match status" value="1"/>
</dbReference>
<dbReference type="SUPFAM" id="SSF56219">
    <property type="entry name" value="DNase I-like"/>
    <property type="match status" value="1"/>
</dbReference>
<protein>
    <recommendedName>
        <fullName evidence="1">UPF0294 protein YE0917</fullName>
    </recommendedName>
</protein>
<reference key="1">
    <citation type="journal article" date="2006" name="PLoS Genet.">
        <title>The complete genome sequence and comparative genome analysis of the high pathogenicity Yersinia enterocolitica strain 8081.</title>
        <authorList>
            <person name="Thomson N.R."/>
            <person name="Howard S."/>
            <person name="Wren B.W."/>
            <person name="Holden M.T.G."/>
            <person name="Crossman L."/>
            <person name="Challis G.L."/>
            <person name="Churcher C."/>
            <person name="Mungall K."/>
            <person name="Brooks K."/>
            <person name="Chillingworth T."/>
            <person name="Feltwell T."/>
            <person name="Abdellah Z."/>
            <person name="Hauser H."/>
            <person name="Jagels K."/>
            <person name="Maddison M."/>
            <person name="Moule S."/>
            <person name="Sanders M."/>
            <person name="Whitehead S."/>
            <person name="Quail M.A."/>
            <person name="Dougan G."/>
            <person name="Parkhill J."/>
            <person name="Prentice M.B."/>
        </authorList>
    </citation>
    <scope>NUCLEOTIDE SEQUENCE [LARGE SCALE GENOMIC DNA]</scope>
    <source>
        <strain>NCTC 13174 / 8081</strain>
    </source>
</reference>
<keyword id="KW-0963">Cytoplasm</keyword>
<name>Y917_YERE8</name>
<gene>
    <name type="ordered locus">YE0917</name>
</gene>
<sequence length="260" mass="29092">MPKRTYAMRYVAGQPVEQIFPGSAKQLGQGLPPGAPLPTTEFLRVMVWNIFKQQRAQWLSVLKEFGRDAQLMLLQEAQTTPELVRFATSHYQAADQVPAFALPQHPSGVMTLAATHPVYCCPLREREPLLRLSKSALITVYPIHDGRLLMVVNIHAVNFSLGVDVYSKQLEPIGEQIAMHRGPVILAGDFNAWSRQRVNALQRFAQGLGLEEVEFSTDNRSRAFGKPLDFVFYRGLTLADASVLVTRASDHNPLLVEFQP</sequence>
<comment type="subcellular location">
    <subcellularLocation>
        <location evidence="1">Cytoplasm</location>
    </subcellularLocation>
</comment>
<comment type="similarity">
    <text evidence="1">Belongs to the UPF0294 family.</text>
</comment>
<feature type="chain" id="PRO_1000065259" description="UPF0294 protein YE0917">
    <location>
        <begin position="1"/>
        <end position="260"/>
    </location>
</feature>
<organism>
    <name type="scientific">Yersinia enterocolitica serotype O:8 / biotype 1B (strain NCTC 13174 / 8081)</name>
    <dbReference type="NCBI Taxonomy" id="393305"/>
    <lineage>
        <taxon>Bacteria</taxon>
        <taxon>Pseudomonadati</taxon>
        <taxon>Pseudomonadota</taxon>
        <taxon>Gammaproteobacteria</taxon>
        <taxon>Enterobacterales</taxon>
        <taxon>Yersiniaceae</taxon>
        <taxon>Yersinia</taxon>
    </lineage>
</organism>
<evidence type="ECO:0000255" key="1">
    <source>
        <dbReference type="HAMAP-Rule" id="MF_01119"/>
    </source>
</evidence>